<sequence length="75" mass="8364">MSLSSWKNLMNPVSESPICMIDLSFLGNSRIVIDEILFKVSEIRLVTVLPPTTLGNKQTLIGVFSAEIISERIEQ</sequence>
<dbReference type="EMBL" id="M35027">
    <property type="protein sequence ID" value="AAA48131.1"/>
    <property type="molecule type" value="Genomic_DNA"/>
</dbReference>
<dbReference type="PIR" id="B42524">
    <property type="entry name" value="B42524"/>
</dbReference>
<dbReference type="Proteomes" id="UP000008269">
    <property type="component" value="Segment"/>
</dbReference>
<name>YVAF_VACCC</name>
<proteinExistence type="predicted"/>
<reference key="1">
    <citation type="journal article" date="1990" name="Virology">
        <title>The complete DNA sequence of vaccinia virus.</title>
        <authorList>
            <person name="Goebel S.J."/>
            <person name="Johnson G.P."/>
            <person name="Perkus M.E."/>
            <person name="Davis S.W."/>
            <person name="Winslow J.P."/>
            <person name="Paoletti E."/>
        </authorList>
    </citation>
    <scope>NUCLEOTIDE SEQUENCE [LARGE SCALE GENOMIC DNA]</scope>
</reference>
<reference key="2">
    <citation type="journal article" date="1990" name="Virology">
        <title>Appendix to 'The complete DNA sequence of vaccinia virus'.</title>
        <authorList>
            <person name="Goebel S.J."/>
            <person name="Johnson G.P."/>
            <person name="Perkus M.E."/>
            <person name="Davis S.W."/>
            <person name="Winslow J.P."/>
            <person name="Paoletti E."/>
        </authorList>
    </citation>
    <scope>COMPLETE GENOME</scope>
</reference>
<protein>
    <recommendedName>
        <fullName>Uncharacterized 8.4 kDa protein</fullName>
    </recommendedName>
</protein>
<feature type="chain" id="PRO_0000099647" description="Uncharacterized 8.4 kDa protein">
    <location>
        <begin position="1"/>
        <end position="75"/>
    </location>
</feature>
<gene>
    <name type="ORF">A ORF F</name>
</gene>
<organismHost>
    <name type="scientific">Homo sapiens</name>
    <name type="common">Human</name>
    <dbReference type="NCBI Taxonomy" id="9606"/>
</organismHost>
<keyword id="KW-1185">Reference proteome</keyword>
<organism>
    <name type="scientific">Vaccinia virus (strain Copenhagen)</name>
    <name type="common">VACV</name>
    <dbReference type="NCBI Taxonomy" id="10249"/>
    <lineage>
        <taxon>Viruses</taxon>
        <taxon>Varidnaviria</taxon>
        <taxon>Bamfordvirae</taxon>
        <taxon>Nucleocytoviricota</taxon>
        <taxon>Pokkesviricetes</taxon>
        <taxon>Chitovirales</taxon>
        <taxon>Poxviridae</taxon>
        <taxon>Chordopoxvirinae</taxon>
        <taxon>Orthopoxvirus</taxon>
        <taxon>Vaccinia virus</taxon>
    </lineage>
</organism>
<accession>P20515</accession>